<sequence length="64" mass="7321">MPKAKTHSGASKRFRRTGTGKIVRQKANRRHLFEHKPSTRTRRLDGHTRVSANDTQRVNSLLNG</sequence>
<name>RL35_MYCLE</name>
<proteinExistence type="inferred from homology"/>
<keyword id="KW-1185">Reference proteome</keyword>
<keyword id="KW-0687">Ribonucleoprotein</keyword>
<keyword id="KW-0689">Ribosomal protein</keyword>
<reference key="1">
    <citation type="journal article" date="2001" name="Nature">
        <title>Massive gene decay in the leprosy bacillus.</title>
        <authorList>
            <person name="Cole S.T."/>
            <person name="Eiglmeier K."/>
            <person name="Parkhill J."/>
            <person name="James K.D."/>
            <person name="Thomson N.R."/>
            <person name="Wheeler P.R."/>
            <person name="Honore N."/>
            <person name="Garnier T."/>
            <person name="Churcher C.M."/>
            <person name="Harris D.E."/>
            <person name="Mungall K.L."/>
            <person name="Basham D."/>
            <person name="Brown D."/>
            <person name="Chillingworth T."/>
            <person name="Connor R."/>
            <person name="Davies R.M."/>
            <person name="Devlin K."/>
            <person name="Duthoy S."/>
            <person name="Feltwell T."/>
            <person name="Fraser A."/>
            <person name="Hamlin N."/>
            <person name="Holroyd S."/>
            <person name="Hornsby T."/>
            <person name="Jagels K."/>
            <person name="Lacroix C."/>
            <person name="Maclean J."/>
            <person name="Moule S."/>
            <person name="Murphy L.D."/>
            <person name="Oliver K."/>
            <person name="Quail M.A."/>
            <person name="Rajandream M.A."/>
            <person name="Rutherford K.M."/>
            <person name="Rutter S."/>
            <person name="Seeger K."/>
            <person name="Simon S."/>
            <person name="Simmonds M."/>
            <person name="Skelton J."/>
            <person name="Squares R."/>
            <person name="Squares S."/>
            <person name="Stevens K."/>
            <person name="Taylor K."/>
            <person name="Whitehead S."/>
            <person name="Woodward J.R."/>
            <person name="Barrell B.G."/>
        </authorList>
    </citation>
    <scope>NUCLEOTIDE SEQUENCE [LARGE SCALE GENOMIC DNA]</scope>
    <source>
        <strain>TN</strain>
    </source>
</reference>
<accession>Q9CC21</accession>
<protein>
    <recommendedName>
        <fullName evidence="1">Large ribosomal subunit protein bL35</fullName>
    </recommendedName>
    <alternativeName>
        <fullName evidence="3">50S ribosomal protein L35</fullName>
    </alternativeName>
</protein>
<organism>
    <name type="scientific">Mycobacterium leprae (strain TN)</name>
    <dbReference type="NCBI Taxonomy" id="272631"/>
    <lineage>
        <taxon>Bacteria</taxon>
        <taxon>Bacillati</taxon>
        <taxon>Actinomycetota</taxon>
        <taxon>Actinomycetes</taxon>
        <taxon>Mycobacteriales</taxon>
        <taxon>Mycobacteriaceae</taxon>
        <taxon>Mycobacterium</taxon>
    </lineage>
</organism>
<gene>
    <name evidence="1" type="primary">rpmI</name>
    <name type="ordered locus">ML1395</name>
</gene>
<dbReference type="EMBL" id="AL583921">
    <property type="protein sequence ID" value="CAC31776.1"/>
    <property type="molecule type" value="Genomic_DNA"/>
</dbReference>
<dbReference type="PIR" id="E87083">
    <property type="entry name" value="E87083"/>
</dbReference>
<dbReference type="RefSeq" id="NP_301993.1">
    <property type="nucleotide sequence ID" value="NC_002677.1"/>
</dbReference>
<dbReference type="RefSeq" id="WP_010908314.1">
    <property type="nucleotide sequence ID" value="NC_002677.1"/>
</dbReference>
<dbReference type="SMR" id="Q9CC21"/>
<dbReference type="STRING" id="272631.gene:17575234"/>
<dbReference type="KEGG" id="mle:ML1395"/>
<dbReference type="PATRIC" id="fig|272631.5.peg.2595"/>
<dbReference type="Leproma" id="ML1395"/>
<dbReference type="eggNOG" id="COG0291">
    <property type="taxonomic scope" value="Bacteria"/>
</dbReference>
<dbReference type="HOGENOM" id="CLU_169643_4_2_11"/>
<dbReference type="OrthoDB" id="9804851at2"/>
<dbReference type="Proteomes" id="UP000000806">
    <property type="component" value="Chromosome"/>
</dbReference>
<dbReference type="GO" id="GO:0022625">
    <property type="term" value="C:cytosolic large ribosomal subunit"/>
    <property type="evidence" value="ECO:0007669"/>
    <property type="project" value="TreeGrafter"/>
</dbReference>
<dbReference type="GO" id="GO:0003735">
    <property type="term" value="F:structural constituent of ribosome"/>
    <property type="evidence" value="ECO:0007669"/>
    <property type="project" value="InterPro"/>
</dbReference>
<dbReference type="GO" id="GO:0006412">
    <property type="term" value="P:translation"/>
    <property type="evidence" value="ECO:0007669"/>
    <property type="project" value="UniProtKB-UniRule"/>
</dbReference>
<dbReference type="FunFam" id="4.10.410.60:FF:000001">
    <property type="entry name" value="50S ribosomal protein L35"/>
    <property type="match status" value="1"/>
</dbReference>
<dbReference type="Gene3D" id="4.10.410.60">
    <property type="match status" value="1"/>
</dbReference>
<dbReference type="HAMAP" id="MF_00514">
    <property type="entry name" value="Ribosomal_bL35"/>
    <property type="match status" value="1"/>
</dbReference>
<dbReference type="InterPro" id="IPR001706">
    <property type="entry name" value="Ribosomal_bL35"/>
</dbReference>
<dbReference type="InterPro" id="IPR021137">
    <property type="entry name" value="Ribosomal_bL35-like"/>
</dbReference>
<dbReference type="InterPro" id="IPR018265">
    <property type="entry name" value="Ribosomal_bL35_CS"/>
</dbReference>
<dbReference type="InterPro" id="IPR037229">
    <property type="entry name" value="Ribosomal_bL35_sf"/>
</dbReference>
<dbReference type="NCBIfam" id="TIGR00001">
    <property type="entry name" value="rpmI_bact"/>
    <property type="match status" value="1"/>
</dbReference>
<dbReference type="PANTHER" id="PTHR33343">
    <property type="entry name" value="54S RIBOSOMAL PROTEIN BL35M"/>
    <property type="match status" value="1"/>
</dbReference>
<dbReference type="PANTHER" id="PTHR33343:SF1">
    <property type="entry name" value="LARGE RIBOSOMAL SUBUNIT PROTEIN BL35M"/>
    <property type="match status" value="1"/>
</dbReference>
<dbReference type="Pfam" id="PF01632">
    <property type="entry name" value="Ribosomal_L35p"/>
    <property type="match status" value="1"/>
</dbReference>
<dbReference type="PRINTS" id="PR00064">
    <property type="entry name" value="RIBOSOMALL35"/>
</dbReference>
<dbReference type="SUPFAM" id="SSF143034">
    <property type="entry name" value="L35p-like"/>
    <property type="match status" value="1"/>
</dbReference>
<dbReference type="PROSITE" id="PS00936">
    <property type="entry name" value="RIBOSOMAL_L35"/>
    <property type="match status" value="1"/>
</dbReference>
<feature type="chain" id="PRO_0000177386" description="Large ribosomal subunit protein bL35">
    <location>
        <begin position="1"/>
        <end position="64"/>
    </location>
</feature>
<feature type="region of interest" description="Disordered" evidence="2">
    <location>
        <begin position="1"/>
        <end position="22"/>
    </location>
</feature>
<feature type="region of interest" description="Disordered" evidence="2">
    <location>
        <begin position="34"/>
        <end position="64"/>
    </location>
</feature>
<feature type="compositionally biased region" description="Basic and acidic residues" evidence="2">
    <location>
        <begin position="34"/>
        <end position="48"/>
    </location>
</feature>
<feature type="compositionally biased region" description="Polar residues" evidence="2">
    <location>
        <begin position="50"/>
        <end position="64"/>
    </location>
</feature>
<evidence type="ECO:0000255" key="1">
    <source>
        <dbReference type="HAMAP-Rule" id="MF_00514"/>
    </source>
</evidence>
<evidence type="ECO:0000256" key="2">
    <source>
        <dbReference type="SAM" id="MobiDB-lite"/>
    </source>
</evidence>
<evidence type="ECO:0000305" key="3"/>
<comment type="similarity">
    <text evidence="1">Belongs to the bacterial ribosomal protein bL35 family.</text>
</comment>